<name>RL17_STAHJ</name>
<gene>
    <name evidence="1" type="primary">rplQ</name>
    <name type="ordered locus">SH0829</name>
</gene>
<dbReference type="EMBL" id="AP006716">
    <property type="protein sequence ID" value="BAE04138.1"/>
    <property type="molecule type" value="Genomic_DNA"/>
</dbReference>
<dbReference type="RefSeq" id="WP_011275144.1">
    <property type="nucleotide sequence ID" value="NC_007168.1"/>
</dbReference>
<dbReference type="SMR" id="Q4L887"/>
<dbReference type="GeneID" id="93780218"/>
<dbReference type="KEGG" id="sha:SH0829"/>
<dbReference type="eggNOG" id="COG0203">
    <property type="taxonomic scope" value="Bacteria"/>
</dbReference>
<dbReference type="HOGENOM" id="CLU_074407_2_2_9"/>
<dbReference type="OrthoDB" id="9809073at2"/>
<dbReference type="Proteomes" id="UP000000543">
    <property type="component" value="Chromosome"/>
</dbReference>
<dbReference type="GO" id="GO:0022625">
    <property type="term" value="C:cytosolic large ribosomal subunit"/>
    <property type="evidence" value="ECO:0007669"/>
    <property type="project" value="TreeGrafter"/>
</dbReference>
<dbReference type="GO" id="GO:0003735">
    <property type="term" value="F:structural constituent of ribosome"/>
    <property type="evidence" value="ECO:0007669"/>
    <property type="project" value="InterPro"/>
</dbReference>
<dbReference type="GO" id="GO:0006412">
    <property type="term" value="P:translation"/>
    <property type="evidence" value="ECO:0007669"/>
    <property type="project" value="UniProtKB-UniRule"/>
</dbReference>
<dbReference type="FunFam" id="3.90.1030.10:FF:000002">
    <property type="entry name" value="50S ribosomal protein L17"/>
    <property type="match status" value="1"/>
</dbReference>
<dbReference type="Gene3D" id="3.90.1030.10">
    <property type="entry name" value="Ribosomal protein L17"/>
    <property type="match status" value="1"/>
</dbReference>
<dbReference type="HAMAP" id="MF_01368">
    <property type="entry name" value="Ribosomal_bL17"/>
    <property type="match status" value="1"/>
</dbReference>
<dbReference type="InterPro" id="IPR000456">
    <property type="entry name" value="Ribosomal_bL17"/>
</dbReference>
<dbReference type="InterPro" id="IPR047859">
    <property type="entry name" value="Ribosomal_bL17_CS"/>
</dbReference>
<dbReference type="InterPro" id="IPR036373">
    <property type="entry name" value="Ribosomal_bL17_sf"/>
</dbReference>
<dbReference type="NCBIfam" id="TIGR00059">
    <property type="entry name" value="L17"/>
    <property type="match status" value="1"/>
</dbReference>
<dbReference type="PANTHER" id="PTHR14413:SF16">
    <property type="entry name" value="LARGE RIBOSOMAL SUBUNIT PROTEIN BL17M"/>
    <property type="match status" value="1"/>
</dbReference>
<dbReference type="PANTHER" id="PTHR14413">
    <property type="entry name" value="RIBOSOMAL PROTEIN L17"/>
    <property type="match status" value="1"/>
</dbReference>
<dbReference type="Pfam" id="PF01196">
    <property type="entry name" value="Ribosomal_L17"/>
    <property type="match status" value="1"/>
</dbReference>
<dbReference type="SUPFAM" id="SSF64263">
    <property type="entry name" value="Prokaryotic ribosomal protein L17"/>
    <property type="match status" value="1"/>
</dbReference>
<dbReference type="PROSITE" id="PS01167">
    <property type="entry name" value="RIBOSOMAL_L17"/>
    <property type="match status" value="1"/>
</dbReference>
<comment type="subunit">
    <text evidence="1">Part of the 50S ribosomal subunit. Contacts protein L32.</text>
</comment>
<comment type="similarity">
    <text evidence="1">Belongs to the bacterial ribosomal protein bL17 family.</text>
</comment>
<accession>Q4L887</accession>
<sequence length="123" mass="13820">MGYRKLGRTSDQRKAMLRDLATSLIVSERIETTEARAKEVRSVVEKLITLGKKGDLASRRNAAKTLRNVEILNEDETTQTALQKLFGEIAERYTERQGGYTRILKVGPRRGDGAESVIIELVD</sequence>
<keyword id="KW-0687">Ribonucleoprotein</keyword>
<keyword id="KW-0689">Ribosomal protein</keyword>
<reference key="1">
    <citation type="journal article" date="2005" name="J. Bacteriol.">
        <title>Whole-genome sequencing of Staphylococcus haemolyticus uncovers the extreme plasticity of its genome and the evolution of human-colonizing staphylococcal species.</title>
        <authorList>
            <person name="Takeuchi F."/>
            <person name="Watanabe S."/>
            <person name="Baba T."/>
            <person name="Yuzawa H."/>
            <person name="Ito T."/>
            <person name="Morimoto Y."/>
            <person name="Kuroda M."/>
            <person name="Cui L."/>
            <person name="Takahashi M."/>
            <person name="Ankai A."/>
            <person name="Baba S."/>
            <person name="Fukui S."/>
            <person name="Lee J.C."/>
            <person name="Hiramatsu K."/>
        </authorList>
    </citation>
    <scope>NUCLEOTIDE SEQUENCE [LARGE SCALE GENOMIC DNA]</scope>
    <source>
        <strain>JCSC1435</strain>
    </source>
</reference>
<proteinExistence type="inferred from homology"/>
<feature type="chain" id="PRO_0000224145" description="Large ribosomal subunit protein bL17">
    <location>
        <begin position="1"/>
        <end position="123"/>
    </location>
</feature>
<evidence type="ECO:0000255" key="1">
    <source>
        <dbReference type="HAMAP-Rule" id="MF_01368"/>
    </source>
</evidence>
<evidence type="ECO:0000305" key="2"/>
<organism>
    <name type="scientific">Staphylococcus haemolyticus (strain JCSC1435)</name>
    <dbReference type="NCBI Taxonomy" id="279808"/>
    <lineage>
        <taxon>Bacteria</taxon>
        <taxon>Bacillati</taxon>
        <taxon>Bacillota</taxon>
        <taxon>Bacilli</taxon>
        <taxon>Bacillales</taxon>
        <taxon>Staphylococcaceae</taxon>
        <taxon>Staphylococcus</taxon>
    </lineage>
</organism>
<protein>
    <recommendedName>
        <fullName evidence="1">Large ribosomal subunit protein bL17</fullName>
    </recommendedName>
    <alternativeName>
        <fullName evidence="2">50S ribosomal protein L17</fullName>
    </alternativeName>
</protein>